<feature type="chain" id="PRO_0000226010" description="Chaperone protein DnaK">
    <location>
        <begin position="1"/>
        <end position="638"/>
    </location>
</feature>
<feature type="region of interest" description="Disordered" evidence="2">
    <location>
        <begin position="602"/>
        <end position="638"/>
    </location>
</feature>
<feature type="compositionally biased region" description="Low complexity" evidence="2">
    <location>
        <begin position="602"/>
        <end position="620"/>
    </location>
</feature>
<feature type="modified residue" description="N6-acetyllysine" evidence="1">
    <location>
        <position position="109"/>
    </location>
</feature>
<feature type="modified residue" description="Phosphothreonine; by autocatalysis" evidence="1">
    <location>
        <position position="199"/>
    </location>
</feature>
<feature type="modified residue" description="N6-acetyllysine" evidence="1">
    <location>
        <position position="245"/>
    </location>
</feature>
<feature type="modified residue" description="N6-acetyllysine" evidence="1">
    <location>
        <position position="304"/>
    </location>
</feature>
<feature type="modified residue" description="N6-acetyllysine" evidence="1">
    <location>
        <position position="421"/>
    </location>
</feature>
<feature type="modified residue" description="N6-acetyllysine" evidence="1">
    <location>
        <position position="556"/>
    </location>
</feature>
<accession>Q3Z601</accession>
<organism>
    <name type="scientific">Shigella sonnei (strain Ss046)</name>
    <dbReference type="NCBI Taxonomy" id="300269"/>
    <lineage>
        <taxon>Bacteria</taxon>
        <taxon>Pseudomonadati</taxon>
        <taxon>Pseudomonadota</taxon>
        <taxon>Gammaproteobacteria</taxon>
        <taxon>Enterobacterales</taxon>
        <taxon>Enterobacteriaceae</taxon>
        <taxon>Shigella</taxon>
    </lineage>
</organism>
<name>DNAK_SHISS</name>
<gene>
    <name evidence="1" type="primary">dnaK</name>
    <name type="ordered locus">SSON_0014</name>
</gene>
<proteinExistence type="inferred from homology"/>
<comment type="function">
    <text evidence="1">Acts as a chaperone.</text>
</comment>
<comment type="induction">
    <text evidence="1">By stress conditions e.g. heat shock.</text>
</comment>
<comment type="similarity">
    <text evidence="1">Belongs to the heat shock protein 70 family.</text>
</comment>
<evidence type="ECO:0000255" key="1">
    <source>
        <dbReference type="HAMAP-Rule" id="MF_00332"/>
    </source>
</evidence>
<evidence type="ECO:0000256" key="2">
    <source>
        <dbReference type="SAM" id="MobiDB-lite"/>
    </source>
</evidence>
<sequence>MGKIIGIDLGTTNSCVAIMDGTTPRVLENAEGDRTTPSIIAYTQDGETLVGQPAKRQAVTNPQNTLFAIKRLIGRRFQDEEVQRDVSIMPFKIIAADNGDAWVEVKGQKMAPPQISAEVLKKMKKTAEDYLGEPVTEAVITVPAYFNDAQRQATKDAGRIAGLEVKRIINEPTAAALAYGLDKGTGNRTIAVYDLGGGTFDISIIEIDEVDGEKTFEVLATNGDTHLGGEDFDSRLINYLVEEFKKDQGIDLRNDPLAMQRLKEAAEKAKIELSSAQQTDVNLPYITADATGPKHMNIKVTRAKLESLVEDLVNRSIEPLKVALQDAGLSVSDIDDVILVGGQTRMPMVQKKVAEFFGKEPRKDVNPDEAVAIGAAVQGGVLTGDVKDVLLLDVTPLSLGIETMGGVMTTLIAKNTTIPTKHSQVFSTAEDNQSAVTIHVLQGERKRAADNKSLGQFNLDGINPAPRGMPQIEVTFDIDADGILHVSAKDKNSGKEQKITIKASSGLNEDEIQKMVRDAEANAEADRKFEELVQTRNQGDHLLHSTRKQVEEAGDKLPADDKTAIESALTALETALKGEDKAAIEAKMQELAQVSQKLMEIAQQQHAQQQTAGADASANNAKDDDVVDAEFEEVKDKK</sequence>
<protein>
    <recommendedName>
        <fullName evidence="1">Chaperone protein DnaK</fullName>
    </recommendedName>
    <alternativeName>
        <fullName evidence="1">HSP70</fullName>
    </alternativeName>
    <alternativeName>
        <fullName evidence="1">Heat shock 70 kDa protein</fullName>
    </alternativeName>
    <alternativeName>
        <fullName evidence="1">Heat shock protein 70</fullName>
    </alternativeName>
</protein>
<dbReference type="EMBL" id="CP000038">
    <property type="protein sequence ID" value="AAZ86811.1"/>
    <property type="molecule type" value="Genomic_DNA"/>
</dbReference>
<dbReference type="RefSeq" id="WP_000516135.1">
    <property type="nucleotide sequence ID" value="NC_007384.1"/>
</dbReference>
<dbReference type="SMR" id="Q3Z601"/>
<dbReference type="GeneID" id="93777429"/>
<dbReference type="KEGG" id="ssn:SSON_0014"/>
<dbReference type="HOGENOM" id="CLU_005965_2_1_6"/>
<dbReference type="Proteomes" id="UP000002529">
    <property type="component" value="Chromosome"/>
</dbReference>
<dbReference type="GO" id="GO:0005524">
    <property type="term" value="F:ATP binding"/>
    <property type="evidence" value="ECO:0007669"/>
    <property type="project" value="UniProtKB-UniRule"/>
</dbReference>
<dbReference type="GO" id="GO:0140662">
    <property type="term" value="F:ATP-dependent protein folding chaperone"/>
    <property type="evidence" value="ECO:0007669"/>
    <property type="project" value="InterPro"/>
</dbReference>
<dbReference type="GO" id="GO:0051082">
    <property type="term" value="F:unfolded protein binding"/>
    <property type="evidence" value="ECO:0007669"/>
    <property type="project" value="InterPro"/>
</dbReference>
<dbReference type="CDD" id="cd10234">
    <property type="entry name" value="ASKHA_NBD_HSP70_DnaK-like"/>
    <property type="match status" value="1"/>
</dbReference>
<dbReference type="FunFam" id="2.60.34.10:FF:000014">
    <property type="entry name" value="Chaperone protein DnaK HSP70"/>
    <property type="match status" value="1"/>
</dbReference>
<dbReference type="FunFam" id="1.20.1270.10:FF:000001">
    <property type="entry name" value="Molecular chaperone DnaK"/>
    <property type="match status" value="1"/>
</dbReference>
<dbReference type="FunFam" id="3.30.420.40:FF:000004">
    <property type="entry name" value="Molecular chaperone DnaK"/>
    <property type="match status" value="1"/>
</dbReference>
<dbReference type="FunFam" id="3.90.640.10:FF:000003">
    <property type="entry name" value="Molecular chaperone DnaK"/>
    <property type="match status" value="1"/>
</dbReference>
<dbReference type="Gene3D" id="1.20.1270.10">
    <property type="match status" value="1"/>
</dbReference>
<dbReference type="Gene3D" id="3.30.420.40">
    <property type="match status" value="2"/>
</dbReference>
<dbReference type="Gene3D" id="3.90.640.10">
    <property type="entry name" value="Actin, Chain A, domain 4"/>
    <property type="match status" value="1"/>
</dbReference>
<dbReference type="Gene3D" id="2.60.34.10">
    <property type="entry name" value="Substrate Binding Domain Of DNAk, Chain A, domain 1"/>
    <property type="match status" value="1"/>
</dbReference>
<dbReference type="HAMAP" id="MF_00332">
    <property type="entry name" value="DnaK"/>
    <property type="match status" value="1"/>
</dbReference>
<dbReference type="InterPro" id="IPR043129">
    <property type="entry name" value="ATPase_NBD"/>
</dbReference>
<dbReference type="InterPro" id="IPR012725">
    <property type="entry name" value="Chaperone_DnaK"/>
</dbReference>
<dbReference type="InterPro" id="IPR018181">
    <property type="entry name" value="Heat_shock_70_CS"/>
</dbReference>
<dbReference type="InterPro" id="IPR029048">
    <property type="entry name" value="HSP70_C_sf"/>
</dbReference>
<dbReference type="InterPro" id="IPR029047">
    <property type="entry name" value="HSP70_peptide-bd_sf"/>
</dbReference>
<dbReference type="InterPro" id="IPR013126">
    <property type="entry name" value="Hsp_70_fam"/>
</dbReference>
<dbReference type="NCBIfam" id="NF001413">
    <property type="entry name" value="PRK00290.1"/>
    <property type="match status" value="1"/>
</dbReference>
<dbReference type="NCBIfam" id="NF003520">
    <property type="entry name" value="PRK05183.1"/>
    <property type="match status" value="1"/>
</dbReference>
<dbReference type="NCBIfam" id="TIGR02350">
    <property type="entry name" value="prok_dnaK"/>
    <property type="match status" value="1"/>
</dbReference>
<dbReference type="PANTHER" id="PTHR19375">
    <property type="entry name" value="HEAT SHOCK PROTEIN 70KDA"/>
    <property type="match status" value="1"/>
</dbReference>
<dbReference type="Pfam" id="PF00012">
    <property type="entry name" value="HSP70"/>
    <property type="match status" value="1"/>
</dbReference>
<dbReference type="PRINTS" id="PR00301">
    <property type="entry name" value="HEATSHOCK70"/>
</dbReference>
<dbReference type="SUPFAM" id="SSF53067">
    <property type="entry name" value="Actin-like ATPase domain"/>
    <property type="match status" value="2"/>
</dbReference>
<dbReference type="SUPFAM" id="SSF100934">
    <property type="entry name" value="Heat shock protein 70kD (HSP70), C-terminal subdomain"/>
    <property type="match status" value="1"/>
</dbReference>
<dbReference type="SUPFAM" id="SSF100920">
    <property type="entry name" value="Heat shock protein 70kD (HSP70), peptide-binding domain"/>
    <property type="match status" value="1"/>
</dbReference>
<dbReference type="PROSITE" id="PS00297">
    <property type="entry name" value="HSP70_1"/>
    <property type="match status" value="1"/>
</dbReference>
<dbReference type="PROSITE" id="PS00329">
    <property type="entry name" value="HSP70_2"/>
    <property type="match status" value="1"/>
</dbReference>
<dbReference type="PROSITE" id="PS01036">
    <property type="entry name" value="HSP70_3"/>
    <property type="match status" value="1"/>
</dbReference>
<reference key="1">
    <citation type="journal article" date="2005" name="Nucleic Acids Res.">
        <title>Genome dynamics and diversity of Shigella species, the etiologic agents of bacillary dysentery.</title>
        <authorList>
            <person name="Yang F."/>
            <person name="Yang J."/>
            <person name="Zhang X."/>
            <person name="Chen L."/>
            <person name="Jiang Y."/>
            <person name="Yan Y."/>
            <person name="Tang X."/>
            <person name="Wang J."/>
            <person name="Xiong Z."/>
            <person name="Dong J."/>
            <person name="Xue Y."/>
            <person name="Zhu Y."/>
            <person name="Xu X."/>
            <person name="Sun L."/>
            <person name="Chen S."/>
            <person name="Nie H."/>
            <person name="Peng J."/>
            <person name="Xu J."/>
            <person name="Wang Y."/>
            <person name="Yuan Z."/>
            <person name="Wen Y."/>
            <person name="Yao Z."/>
            <person name="Shen Y."/>
            <person name="Qiang B."/>
            <person name="Hou Y."/>
            <person name="Yu J."/>
            <person name="Jin Q."/>
        </authorList>
    </citation>
    <scope>NUCLEOTIDE SEQUENCE [LARGE SCALE GENOMIC DNA]</scope>
    <source>
        <strain>Ss046</strain>
    </source>
</reference>
<keyword id="KW-0007">Acetylation</keyword>
<keyword id="KW-0067">ATP-binding</keyword>
<keyword id="KW-0143">Chaperone</keyword>
<keyword id="KW-0547">Nucleotide-binding</keyword>
<keyword id="KW-0597">Phosphoprotein</keyword>
<keyword id="KW-1185">Reference proteome</keyword>
<keyword id="KW-0346">Stress response</keyword>